<protein>
    <recommendedName>
        <fullName evidence="1">Glycerol-3-phosphate acyltransferase</fullName>
    </recommendedName>
    <alternativeName>
        <fullName evidence="1">Acyl-PO4 G3P acyltransferase</fullName>
    </alternativeName>
    <alternativeName>
        <fullName evidence="1">Acyl-phosphate--glycerol-3-phosphate acyltransferase</fullName>
    </alternativeName>
    <alternativeName>
        <fullName evidence="1">G3P acyltransferase</fullName>
        <shortName evidence="1">GPAT</shortName>
        <ecNumber evidence="1">2.3.1.275</ecNumber>
    </alternativeName>
    <alternativeName>
        <fullName evidence="1">Lysophosphatidic acid synthase</fullName>
        <shortName evidence="1">LPA synthase</shortName>
    </alternativeName>
</protein>
<feature type="chain" id="PRO_1000084397" description="Glycerol-3-phosphate acyltransferase">
    <location>
        <begin position="1"/>
        <end position="202"/>
    </location>
</feature>
<feature type="transmembrane region" description="Helical" evidence="1">
    <location>
        <begin position="2"/>
        <end position="22"/>
    </location>
</feature>
<feature type="transmembrane region" description="Helical" evidence="1">
    <location>
        <begin position="54"/>
        <end position="74"/>
    </location>
</feature>
<feature type="transmembrane region" description="Helical" evidence="1">
    <location>
        <begin position="85"/>
        <end position="105"/>
    </location>
</feature>
<feature type="transmembrane region" description="Helical" evidence="1">
    <location>
        <begin position="120"/>
        <end position="140"/>
    </location>
</feature>
<feature type="transmembrane region" description="Helical" evidence="1">
    <location>
        <begin position="141"/>
        <end position="161"/>
    </location>
</feature>
<feature type="transmembrane region" description="Helical" evidence="1">
    <location>
        <begin position="162"/>
        <end position="182"/>
    </location>
</feature>
<accession>A6U1H4</accession>
<proteinExistence type="inferred from homology"/>
<sequence>MMIIVMLLLSYLIGAFPSGFVIGKLFFKKDIRQFGSGNTGATNSFRVLGRPAGFLVTFLDIFKGFITVFFPLWLPVHADGPISTFFTNGLIVGLFAILGHVYPVYLKFQGGKAVATSAGVVLGVNPILLLILAIIFFIVLKIFKYVSLASIVAAICCVIGSLIIQDYILLVVSFLVSIILIIRHRSNIARIFRGEEPKIKWM</sequence>
<dbReference type="EC" id="2.3.1.275" evidence="1"/>
<dbReference type="EMBL" id="CP000736">
    <property type="protein sequence ID" value="ABR52292.1"/>
    <property type="molecule type" value="Genomic_DNA"/>
</dbReference>
<dbReference type="SMR" id="A6U1H4"/>
<dbReference type="KEGG" id="sah:SaurJH1_1442"/>
<dbReference type="HOGENOM" id="CLU_081254_4_0_9"/>
<dbReference type="UniPathway" id="UPA00085"/>
<dbReference type="GO" id="GO:0005886">
    <property type="term" value="C:plasma membrane"/>
    <property type="evidence" value="ECO:0007669"/>
    <property type="project" value="UniProtKB-SubCell"/>
</dbReference>
<dbReference type="GO" id="GO:0043772">
    <property type="term" value="F:acyl-phosphate glycerol-3-phosphate acyltransferase activity"/>
    <property type="evidence" value="ECO:0007669"/>
    <property type="project" value="UniProtKB-UniRule"/>
</dbReference>
<dbReference type="GO" id="GO:0008654">
    <property type="term" value="P:phospholipid biosynthetic process"/>
    <property type="evidence" value="ECO:0007669"/>
    <property type="project" value="UniProtKB-UniRule"/>
</dbReference>
<dbReference type="HAMAP" id="MF_01043">
    <property type="entry name" value="PlsY"/>
    <property type="match status" value="1"/>
</dbReference>
<dbReference type="InterPro" id="IPR003811">
    <property type="entry name" value="G3P_acylTferase_PlsY"/>
</dbReference>
<dbReference type="NCBIfam" id="TIGR00023">
    <property type="entry name" value="glycerol-3-phosphate 1-O-acyltransferase PlsY"/>
    <property type="match status" value="1"/>
</dbReference>
<dbReference type="PANTHER" id="PTHR30309:SF0">
    <property type="entry name" value="GLYCEROL-3-PHOSPHATE ACYLTRANSFERASE-RELATED"/>
    <property type="match status" value="1"/>
</dbReference>
<dbReference type="PANTHER" id="PTHR30309">
    <property type="entry name" value="INNER MEMBRANE PROTEIN YGIH"/>
    <property type="match status" value="1"/>
</dbReference>
<dbReference type="Pfam" id="PF02660">
    <property type="entry name" value="G3P_acyltransf"/>
    <property type="match status" value="1"/>
</dbReference>
<dbReference type="SMART" id="SM01207">
    <property type="entry name" value="G3P_acyltransf"/>
    <property type="match status" value="1"/>
</dbReference>
<organism>
    <name type="scientific">Staphylococcus aureus (strain JH1)</name>
    <dbReference type="NCBI Taxonomy" id="359787"/>
    <lineage>
        <taxon>Bacteria</taxon>
        <taxon>Bacillati</taxon>
        <taxon>Bacillota</taxon>
        <taxon>Bacilli</taxon>
        <taxon>Bacillales</taxon>
        <taxon>Staphylococcaceae</taxon>
        <taxon>Staphylococcus</taxon>
    </lineage>
</organism>
<reference key="1">
    <citation type="submission" date="2007-06" db="EMBL/GenBank/DDBJ databases">
        <title>Complete sequence of chromosome of Staphylococcus aureus subsp. aureus JH1.</title>
        <authorList>
            <consortium name="US DOE Joint Genome Institute"/>
            <person name="Copeland A."/>
            <person name="Lucas S."/>
            <person name="Lapidus A."/>
            <person name="Barry K."/>
            <person name="Detter J.C."/>
            <person name="Glavina del Rio T."/>
            <person name="Hammon N."/>
            <person name="Israni S."/>
            <person name="Dalin E."/>
            <person name="Tice H."/>
            <person name="Pitluck S."/>
            <person name="Chain P."/>
            <person name="Malfatti S."/>
            <person name="Shin M."/>
            <person name="Vergez L."/>
            <person name="Schmutz J."/>
            <person name="Larimer F."/>
            <person name="Land M."/>
            <person name="Hauser L."/>
            <person name="Kyrpides N."/>
            <person name="Ivanova N."/>
            <person name="Tomasz A."/>
            <person name="Richardson P."/>
        </authorList>
    </citation>
    <scope>NUCLEOTIDE SEQUENCE [LARGE SCALE GENOMIC DNA]</scope>
    <source>
        <strain>JH1</strain>
    </source>
</reference>
<comment type="function">
    <text evidence="1">Catalyzes the transfer of an acyl group from acyl-phosphate (acyl-PO(4)) to glycerol-3-phosphate (G3P) to form lysophosphatidic acid (LPA). This enzyme utilizes acyl-phosphate as fatty acyl donor, but not acyl-CoA or acyl-ACP.</text>
</comment>
<comment type="catalytic activity">
    <reaction evidence="1">
        <text>an acyl phosphate + sn-glycerol 3-phosphate = a 1-acyl-sn-glycero-3-phosphate + phosphate</text>
        <dbReference type="Rhea" id="RHEA:34075"/>
        <dbReference type="ChEBI" id="CHEBI:43474"/>
        <dbReference type="ChEBI" id="CHEBI:57597"/>
        <dbReference type="ChEBI" id="CHEBI:57970"/>
        <dbReference type="ChEBI" id="CHEBI:59918"/>
        <dbReference type="EC" id="2.3.1.275"/>
    </reaction>
</comment>
<comment type="pathway">
    <text evidence="1">Lipid metabolism; phospholipid metabolism.</text>
</comment>
<comment type="subunit">
    <text evidence="1">Probably interacts with PlsX.</text>
</comment>
<comment type="subcellular location">
    <subcellularLocation>
        <location evidence="1">Cell membrane</location>
        <topology evidence="1">Multi-pass membrane protein</topology>
    </subcellularLocation>
</comment>
<comment type="similarity">
    <text evidence="1">Belongs to the PlsY family.</text>
</comment>
<gene>
    <name evidence="1" type="primary">plsY</name>
    <name type="ordered locus">SaurJH1_1442</name>
</gene>
<evidence type="ECO:0000255" key="1">
    <source>
        <dbReference type="HAMAP-Rule" id="MF_01043"/>
    </source>
</evidence>
<name>PLSY_STAA2</name>
<keyword id="KW-1003">Cell membrane</keyword>
<keyword id="KW-0444">Lipid biosynthesis</keyword>
<keyword id="KW-0443">Lipid metabolism</keyword>
<keyword id="KW-0472">Membrane</keyword>
<keyword id="KW-0594">Phospholipid biosynthesis</keyword>
<keyword id="KW-1208">Phospholipid metabolism</keyword>
<keyword id="KW-0808">Transferase</keyword>
<keyword id="KW-0812">Transmembrane</keyword>
<keyword id="KW-1133">Transmembrane helix</keyword>